<dbReference type="EMBL" id="AC002339">
    <property type="protein sequence ID" value="AAC02768.1"/>
    <property type="molecule type" value="Genomic_DNA"/>
</dbReference>
<dbReference type="EMBL" id="CP002685">
    <property type="protein sequence ID" value="AEC10034.1"/>
    <property type="molecule type" value="Genomic_DNA"/>
</dbReference>
<dbReference type="EMBL" id="AY070757">
    <property type="protein sequence ID" value="AAL50095.1"/>
    <property type="molecule type" value="mRNA"/>
</dbReference>
<dbReference type="EMBL" id="AY097378">
    <property type="protein sequence ID" value="AAM19894.1"/>
    <property type="molecule type" value="mRNA"/>
</dbReference>
<dbReference type="PIR" id="C84846">
    <property type="entry name" value="C84846"/>
</dbReference>
<dbReference type="RefSeq" id="NP_181711.1">
    <property type="nucleotide sequence ID" value="NM_129744.5"/>
</dbReference>
<dbReference type="FunCoup" id="O22940">
    <property type="interactions" value="88"/>
</dbReference>
<dbReference type="STRING" id="3702.O22940"/>
<dbReference type="GlyGen" id="O22940">
    <property type="glycosylation" value="1 site"/>
</dbReference>
<dbReference type="PaxDb" id="3702-AT2G41800.1"/>
<dbReference type="ProteomicsDB" id="193600"/>
<dbReference type="EnsemblPlants" id="AT2G41800.1">
    <property type="protein sequence ID" value="AT2G41800.1"/>
    <property type="gene ID" value="AT2G41800"/>
</dbReference>
<dbReference type="GeneID" id="818779"/>
<dbReference type="Gramene" id="AT2G41800.1">
    <property type="protein sequence ID" value="AT2G41800.1"/>
    <property type="gene ID" value="AT2G41800"/>
</dbReference>
<dbReference type="KEGG" id="ath:AT2G41800"/>
<dbReference type="Araport" id="AT2G41800"/>
<dbReference type="TAIR" id="AT2G41800"/>
<dbReference type="eggNOG" id="ENOG502QQK0">
    <property type="taxonomic scope" value="Eukaryota"/>
</dbReference>
<dbReference type="HOGENOM" id="CLU_040251_0_0_1"/>
<dbReference type="OMA" id="HVFANFS"/>
<dbReference type="CD-CODE" id="4299E36E">
    <property type="entry name" value="Nucleolus"/>
</dbReference>
<dbReference type="PRO" id="PR:O22940"/>
<dbReference type="Proteomes" id="UP000006548">
    <property type="component" value="Chromosome 2"/>
</dbReference>
<dbReference type="ExpressionAtlas" id="O22940">
    <property type="expression patterns" value="baseline and differential"/>
</dbReference>
<dbReference type="GO" id="GO:0005576">
    <property type="term" value="C:extracellular region"/>
    <property type="evidence" value="ECO:0007669"/>
    <property type="project" value="UniProtKB-KW"/>
</dbReference>
<dbReference type="GO" id="GO:0009505">
    <property type="term" value="C:plant-type cell wall"/>
    <property type="evidence" value="ECO:0000314"/>
    <property type="project" value="UniProtKB"/>
</dbReference>
<dbReference type="GO" id="GO:0009506">
    <property type="term" value="C:plasmodesma"/>
    <property type="evidence" value="ECO:0007005"/>
    <property type="project" value="TAIR"/>
</dbReference>
<dbReference type="GO" id="GO:0051511">
    <property type="term" value="P:negative regulation of unidimensional cell growth"/>
    <property type="evidence" value="ECO:0000315"/>
    <property type="project" value="TAIR"/>
</dbReference>
<dbReference type="GO" id="GO:1902066">
    <property type="term" value="P:regulation of cell wall pectin metabolic process"/>
    <property type="evidence" value="ECO:0000315"/>
    <property type="project" value="TAIR"/>
</dbReference>
<dbReference type="GO" id="GO:1905421">
    <property type="term" value="P:regulation of plant organ morphogenesis"/>
    <property type="evidence" value="ECO:0000315"/>
    <property type="project" value="UniProtKB"/>
</dbReference>
<dbReference type="GO" id="GO:0009733">
    <property type="term" value="P:response to auxin"/>
    <property type="evidence" value="ECO:0000270"/>
    <property type="project" value="UniProtKB"/>
</dbReference>
<dbReference type="GO" id="GO:0009624">
    <property type="term" value="P:response to nematode"/>
    <property type="evidence" value="ECO:0000270"/>
    <property type="project" value="UniProtKB"/>
</dbReference>
<dbReference type="FunFam" id="2.60.120.260:FF:000031">
    <property type="entry name" value="DUF642 family protein"/>
    <property type="match status" value="1"/>
</dbReference>
<dbReference type="Gene3D" id="2.60.120.260">
    <property type="entry name" value="Galactose-binding domain-like"/>
    <property type="match status" value="1"/>
</dbReference>
<dbReference type="InterPro" id="IPR006946">
    <property type="entry name" value="DGR2-like_dom"/>
</dbReference>
<dbReference type="InterPro" id="IPR008979">
    <property type="entry name" value="Galactose-bd-like_sf"/>
</dbReference>
<dbReference type="InterPro" id="IPR052437">
    <property type="entry name" value="Pectin_Meth_Modulator"/>
</dbReference>
<dbReference type="PANTHER" id="PTHR31265:SF23">
    <property type="entry name" value="DUF642 DOMAIN-CONTAINING PROTEIN"/>
    <property type="match status" value="1"/>
</dbReference>
<dbReference type="PANTHER" id="PTHR31265">
    <property type="entry name" value="OS02G0527500 PROTEIN-RELATED"/>
    <property type="match status" value="1"/>
</dbReference>
<dbReference type="Pfam" id="PF04862">
    <property type="entry name" value="DUF642"/>
    <property type="match status" value="2"/>
</dbReference>
<dbReference type="SUPFAM" id="SSF49785">
    <property type="entry name" value="Galactose-binding domain-like"/>
    <property type="match status" value="1"/>
</dbReference>
<reference key="1">
    <citation type="journal article" date="1999" name="Nature">
        <title>Sequence and analysis of chromosome 2 of the plant Arabidopsis thaliana.</title>
        <authorList>
            <person name="Lin X."/>
            <person name="Kaul S."/>
            <person name="Rounsley S.D."/>
            <person name="Shea T.P."/>
            <person name="Benito M.-I."/>
            <person name="Town C.D."/>
            <person name="Fujii C.Y."/>
            <person name="Mason T.M."/>
            <person name="Bowman C.L."/>
            <person name="Barnstead M.E."/>
            <person name="Feldblyum T.V."/>
            <person name="Buell C.R."/>
            <person name="Ketchum K.A."/>
            <person name="Lee J.J."/>
            <person name="Ronning C.M."/>
            <person name="Koo H.L."/>
            <person name="Moffat K.S."/>
            <person name="Cronin L.A."/>
            <person name="Shen M."/>
            <person name="Pai G."/>
            <person name="Van Aken S."/>
            <person name="Umayam L."/>
            <person name="Tallon L.J."/>
            <person name="Gill J.E."/>
            <person name="Adams M.D."/>
            <person name="Carrera A.J."/>
            <person name="Creasy T.H."/>
            <person name="Goodman H.M."/>
            <person name="Somerville C.R."/>
            <person name="Copenhaver G.P."/>
            <person name="Preuss D."/>
            <person name="Nierman W.C."/>
            <person name="White O."/>
            <person name="Eisen J.A."/>
            <person name="Salzberg S.L."/>
            <person name="Fraser C.M."/>
            <person name="Venter J.C."/>
        </authorList>
    </citation>
    <scope>NUCLEOTIDE SEQUENCE [LARGE SCALE GENOMIC DNA]</scope>
    <source>
        <strain>cv. Columbia</strain>
    </source>
</reference>
<reference key="2">
    <citation type="journal article" date="2017" name="Plant J.">
        <title>Araport11: a complete reannotation of the Arabidopsis thaliana reference genome.</title>
        <authorList>
            <person name="Cheng C.Y."/>
            <person name="Krishnakumar V."/>
            <person name="Chan A.P."/>
            <person name="Thibaud-Nissen F."/>
            <person name="Schobel S."/>
            <person name="Town C.D."/>
        </authorList>
    </citation>
    <scope>GENOME REANNOTATION</scope>
    <source>
        <strain>cv. Columbia</strain>
    </source>
</reference>
<reference key="3">
    <citation type="journal article" date="2003" name="Science">
        <title>Empirical analysis of transcriptional activity in the Arabidopsis genome.</title>
        <authorList>
            <person name="Yamada K."/>
            <person name="Lim J."/>
            <person name="Dale J.M."/>
            <person name="Chen H."/>
            <person name="Shinn P."/>
            <person name="Palm C.J."/>
            <person name="Southwick A.M."/>
            <person name="Wu H.C."/>
            <person name="Kim C.J."/>
            <person name="Nguyen M."/>
            <person name="Pham P.K."/>
            <person name="Cheuk R.F."/>
            <person name="Karlin-Newmann G."/>
            <person name="Liu S.X."/>
            <person name="Lam B."/>
            <person name="Sakano H."/>
            <person name="Wu T."/>
            <person name="Yu G."/>
            <person name="Miranda M."/>
            <person name="Quach H.L."/>
            <person name="Tripp M."/>
            <person name="Chang C.H."/>
            <person name="Lee J.M."/>
            <person name="Toriumi M.J."/>
            <person name="Chan M.M."/>
            <person name="Tang C.C."/>
            <person name="Onodera C.S."/>
            <person name="Deng J.M."/>
            <person name="Akiyama K."/>
            <person name="Ansari Y."/>
            <person name="Arakawa T."/>
            <person name="Banh J."/>
            <person name="Banno F."/>
            <person name="Bowser L."/>
            <person name="Brooks S.Y."/>
            <person name="Carninci P."/>
            <person name="Chao Q."/>
            <person name="Choy N."/>
            <person name="Enju A."/>
            <person name="Goldsmith A.D."/>
            <person name="Gurjal M."/>
            <person name="Hansen N.F."/>
            <person name="Hayashizaki Y."/>
            <person name="Johnson-Hopson C."/>
            <person name="Hsuan V.W."/>
            <person name="Iida K."/>
            <person name="Karnes M."/>
            <person name="Khan S."/>
            <person name="Koesema E."/>
            <person name="Ishida J."/>
            <person name="Jiang P.X."/>
            <person name="Jones T."/>
            <person name="Kawai J."/>
            <person name="Kamiya A."/>
            <person name="Meyers C."/>
            <person name="Nakajima M."/>
            <person name="Narusaka M."/>
            <person name="Seki M."/>
            <person name="Sakurai T."/>
            <person name="Satou M."/>
            <person name="Tamse R."/>
            <person name="Vaysberg M."/>
            <person name="Wallender E.K."/>
            <person name="Wong C."/>
            <person name="Yamamura Y."/>
            <person name="Yuan S."/>
            <person name="Shinozaki K."/>
            <person name="Davis R.W."/>
            <person name="Theologis A."/>
            <person name="Ecker J.R."/>
        </authorList>
    </citation>
    <scope>NUCLEOTIDE SEQUENCE [LARGE SCALE MRNA]</scope>
    <source>
        <strain>cv. Columbia</strain>
    </source>
</reference>
<reference key="4">
    <citation type="journal article" date="2012" name="Mol. Phylogenet. Evol.">
        <title>The highly conserved spermatophyte cell wall DUF642 protein family: phylogeny and first evidence of interaction with cell wall polysaccharides in vitro.</title>
        <authorList>
            <person name="Vazquez-Lobo A."/>
            <person name="Roujol D."/>
            <person name="Zuniga-Sanchez E."/>
            <person name="Albenne C."/>
            <person name="Pinero D."/>
            <person name="Gamboa de Buen A."/>
            <person name="Jamet E."/>
        </authorList>
    </citation>
    <scope>GENE FAMILY</scope>
</reference>
<reference key="5">
    <citation type="journal article" date="2016" name="Plant Sci.">
        <title>The cell wall DUF642 At2g41800 (TEB) protein is involved in hypocotyl cell elongation.</title>
        <authorList>
            <person name="Salazar-Iribe A."/>
            <person name="Agredano-Moreno L.T."/>
            <person name="Zuniga-Sanchez E."/>
            <person name="Jimenez-Garcia L.F."/>
            <person name="Gamboa-deBuen A."/>
        </authorList>
    </citation>
    <scope>FUNCTION</scope>
    <scope>DISRUPTION PHENOTYPE</scope>
    <scope>INDUCTION BY AUXIN AND DURING THE CELL CYCLE</scope>
    <scope>TISSUE SPECIFICITY</scope>
    <scope>DEVELOPMENTAL STAGE</scope>
    <scope>SUBCELLULAR LOCATION</scope>
    <source>
        <strain>cv. Columbia</strain>
    </source>
</reference>
<reference key="6">
    <citation type="journal article" date="2017" name="Plant Pathol. J.">
        <title>Cell wall localization of two DUF642 proteins, BIIDXI and TEEBE, during Meloidogyne incognita early inoculation.</title>
        <authorList>
            <person name="Salazar-Iribe A."/>
            <person name="Zuniga-Sanchez E."/>
            <person name="Mejia E.Z."/>
            <person name="Gamboa-deBuen A."/>
        </authorList>
    </citation>
    <scope>INDUCTION BY AUXIN AND NEMATODE</scope>
    <scope>SUBCELLULAR LOCATION</scope>
    <source>
        <strain>cv. Columbia</strain>
    </source>
</reference>
<reference key="7">
    <citation type="journal article" date="2019" name="Int. J. Mol. Sci.">
        <title>Overview of the role of cell wall DUF642 proteins in plant development.</title>
        <authorList>
            <person name="Cruz-Valderrama J.E."/>
            <person name="Gomez-Maqueo X."/>
            <person name="Salazar-Iribe A."/>
            <person name="Zuniga-Sanchez E."/>
            <person name="Hernandez-Barrera A."/>
            <person name="Quezada-Rodriguez E."/>
            <person name="Gamboa-deBuen A."/>
        </authorList>
    </citation>
    <scope>REVIEW ON DUF642 PROTEINS</scope>
</reference>
<gene>
    <name evidence="5" type="primary">TEB</name>
    <name evidence="7" type="ordered locus">At2g41800</name>
    <name evidence="8" type="ORF">T11A7.10</name>
</gene>
<comment type="function">
    <text evidence="3 4">Prevents hypocotyl epidermal cells elongation by modulating the pectin status in cell walls (PubMed:27968989). Likely regulates pectin methylesterification degree during cell separation and elongation, including upon root-knot nematode Meloidogyne incognita infection (PubMed:27968989, PubMed:29238286).</text>
</comment>
<comment type="subcellular location">
    <subcellularLocation>
        <location evidence="3 4">Secreted</location>
        <location evidence="3 4">Cell wall</location>
    </subcellularLocation>
    <text evidence="4">Accumulates at the cell wall upon root-knot nematode Meloidogyne incognita infection.</text>
</comment>
<comment type="tissue specificity">
    <text evidence="3">Expressed in primary and lateral roots, stigmatic papillae and hypocotyls.</text>
</comment>
<comment type="developmental stage">
    <text evidence="3">In primary roots, present in the meristematic zone as well as in the epidermal cells overlying the lateral root (LR) and in the emerging lateral root primordia (PubMed:27968989). In hypocotyls, expressed in epidermal cells (PubMed:27968989). Accumulates during early callus induction in the epidermal cells overlying the callus primordial present in the elongation zone of a primary root (PubMed:27968989).</text>
</comment>
<comment type="induction">
    <text evidence="3 4">Highly induced during the M/G1 phases of the cell cycle in the meristematic zone of the primary root (PubMed:27968989). Induced by auxin (PubMed:27968989, PubMed:29238286). Highly and early up-regulated in roots during root-knot nematode Meloidogyne incognita infection (PubMed:29238286).</text>
</comment>
<comment type="disruption phenotype">
    <text evidence="3">Increased hypocotyls growth in seedlings under both light and dark conditions, with longest epidermal cells.</text>
</comment>
<comment type="miscellaneous">
    <text evidence="6">'Teebe' means long in the Mayo-Yoreme language.</text>
</comment>
<accession>O22940</accession>
<keyword id="KW-0134">Cell wall</keyword>
<keyword id="KW-0217">Developmental protein</keyword>
<keyword id="KW-0325">Glycoprotein</keyword>
<keyword id="KW-1185">Reference proteome</keyword>
<keyword id="KW-0964">Secreted</keyword>
<keyword id="KW-0732">Signal</keyword>
<name>TEEBE_ARATH</name>
<protein>
    <recommendedName>
        <fullName evidence="5">Protein TEEBE</fullName>
    </recommendedName>
</protein>
<proteinExistence type="evidence at transcript level"/>
<evidence type="ECO:0000255" key="1"/>
<evidence type="ECO:0000255" key="2">
    <source>
        <dbReference type="PROSITE-ProRule" id="PRU00498"/>
    </source>
</evidence>
<evidence type="ECO:0000269" key="3">
    <source>
    </source>
</evidence>
<evidence type="ECO:0000269" key="4">
    <source>
    </source>
</evidence>
<evidence type="ECO:0000303" key="5">
    <source>
    </source>
</evidence>
<evidence type="ECO:0000305" key="6">
    <source>
    </source>
</evidence>
<evidence type="ECO:0000312" key="7">
    <source>
        <dbReference type="Araport" id="AT2G41800"/>
    </source>
</evidence>
<evidence type="ECO:0000312" key="8">
    <source>
        <dbReference type="EMBL" id="AAC02768.1"/>
    </source>
</evidence>
<sequence length="370" mass="40370">MSLYHSLSIFLLLSLCHGSYSLQPRRVPHLDGILPNGNFEITPLKSNMKGRQIIGANSLPHWEIAGHVELVSGGPQPGGFYFPVPRGVHAVRLGNLGTISQNVRVKSGLVYSLTFGATRTCAQDENIKVSVPGQANELPLQTVFSSDGGDTYAWAFKATSDVVKVTFHNPGVQEDRTCGPLLDVVAIKEILPLRYTRGNLVKNGGFEIGPHVFANFSTGILIPARIQDFISPLPGWIVESLKPVKYIDRRHFKVPYGQGAVELVAGRESAIAQIIRTIAGKAYMLSFAVGDAQNGCHGSMMVEAFAGREPFKLSFMSEGKGAFKTGHFRFVADSDRTRLTFYSAFYHTKLHDFGHLCGPVLDSVVVTLAR</sequence>
<organism>
    <name type="scientific">Arabidopsis thaliana</name>
    <name type="common">Mouse-ear cress</name>
    <dbReference type="NCBI Taxonomy" id="3702"/>
    <lineage>
        <taxon>Eukaryota</taxon>
        <taxon>Viridiplantae</taxon>
        <taxon>Streptophyta</taxon>
        <taxon>Embryophyta</taxon>
        <taxon>Tracheophyta</taxon>
        <taxon>Spermatophyta</taxon>
        <taxon>Magnoliopsida</taxon>
        <taxon>eudicotyledons</taxon>
        <taxon>Gunneridae</taxon>
        <taxon>Pentapetalae</taxon>
        <taxon>rosids</taxon>
        <taxon>malvids</taxon>
        <taxon>Brassicales</taxon>
        <taxon>Brassicaceae</taxon>
        <taxon>Camelineae</taxon>
        <taxon>Arabidopsis</taxon>
    </lineage>
</organism>
<feature type="signal peptide" evidence="1">
    <location>
        <begin position="1"/>
        <end position="21"/>
    </location>
</feature>
<feature type="chain" id="PRO_5014306489" description="Protein TEEBE">
    <location>
        <begin position="22"/>
        <end position="370"/>
    </location>
</feature>
<feature type="glycosylation site" description="N-linked (GlcNAc...) asparagine" evidence="2">
    <location>
        <position position="215"/>
    </location>
</feature>